<evidence type="ECO:0000255" key="1">
    <source>
        <dbReference type="HAMAP-Rule" id="MF_00158"/>
    </source>
</evidence>
<gene>
    <name evidence="1" type="primary">panC</name>
    <name type="ordered locus">BT_4308</name>
</gene>
<protein>
    <recommendedName>
        <fullName evidence="1">Pantothenate synthetase</fullName>
        <shortName evidence="1">PS</shortName>
        <ecNumber evidence="1">6.3.2.1</ecNumber>
    </recommendedName>
    <alternativeName>
        <fullName evidence="1">Pantoate--beta-alanine ligase</fullName>
    </alternativeName>
    <alternativeName>
        <fullName evidence="1">Pantoate-activating enzyme</fullName>
    </alternativeName>
</protein>
<feature type="chain" id="PRO_0000305400" description="Pantothenate synthetase">
    <location>
        <begin position="1"/>
        <end position="282"/>
    </location>
</feature>
<feature type="active site" description="Proton donor" evidence="1">
    <location>
        <position position="37"/>
    </location>
</feature>
<feature type="binding site" evidence="1">
    <location>
        <begin position="30"/>
        <end position="37"/>
    </location>
    <ligand>
        <name>ATP</name>
        <dbReference type="ChEBI" id="CHEBI:30616"/>
    </ligand>
</feature>
<feature type="binding site" evidence="1">
    <location>
        <position position="61"/>
    </location>
    <ligand>
        <name>(R)-pantoate</name>
        <dbReference type="ChEBI" id="CHEBI:15980"/>
    </ligand>
</feature>
<feature type="binding site" evidence="1">
    <location>
        <position position="61"/>
    </location>
    <ligand>
        <name>beta-alanine</name>
        <dbReference type="ChEBI" id="CHEBI:57966"/>
    </ligand>
</feature>
<feature type="binding site" evidence="1">
    <location>
        <begin position="147"/>
        <end position="150"/>
    </location>
    <ligand>
        <name>ATP</name>
        <dbReference type="ChEBI" id="CHEBI:30616"/>
    </ligand>
</feature>
<feature type="binding site" evidence="1">
    <location>
        <position position="153"/>
    </location>
    <ligand>
        <name>(R)-pantoate</name>
        <dbReference type="ChEBI" id="CHEBI:15980"/>
    </ligand>
</feature>
<feature type="binding site" evidence="1">
    <location>
        <position position="176"/>
    </location>
    <ligand>
        <name>ATP</name>
        <dbReference type="ChEBI" id="CHEBI:30616"/>
    </ligand>
</feature>
<feature type="binding site" evidence="1">
    <location>
        <begin position="184"/>
        <end position="187"/>
    </location>
    <ligand>
        <name>ATP</name>
        <dbReference type="ChEBI" id="CHEBI:30616"/>
    </ligand>
</feature>
<keyword id="KW-0067">ATP-binding</keyword>
<keyword id="KW-0963">Cytoplasm</keyword>
<keyword id="KW-0436">Ligase</keyword>
<keyword id="KW-0547">Nucleotide-binding</keyword>
<keyword id="KW-0566">Pantothenate biosynthesis</keyword>
<keyword id="KW-1185">Reference proteome</keyword>
<comment type="function">
    <text evidence="1">Catalyzes the condensation of pantoate with beta-alanine in an ATP-dependent reaction via a pantoyl-adenylate intermediate.</text>
</comment>
<comment type="catalytic activity">
    <reaction evidence="1">
        <text>(R)-pantoate + beta-alanine + ATP = (R)-pantothenate + AMP + diphosphate + H(+)</text>
        <dbReference type="Rhea" id="RHEA:10912"/>
        <dbReference type="ChEBI" id="CHEBI:15378"/>
        <dbReference type="ChEBI" id="CHEBI:15980"/>
        <dbReference type="ChEBI" id="CHEBI:29032"/>
        <dbReference type="ChEBI" id="CHEBI:30616"/>
        <dbReference type="ChEBI" id="CHEBI:33019"/>
        <dbReference type="ChEBI" id="CHEBI:57966"/>
        <dbReference type="ChEBI" id="CHEBI:456215"/>
        <dbReference type="EC" id="6.3.2.1"/>
    </reaction>
</comment>
<comment type="pathway">
    <text evidence="1">Cofactor biosynthesis; (R)-pantothenate biosynthesis; (R)-pantothenate from (R)-pantoate and beta-alanine: step 1/1.</text>
</comment>
<comment type="subunit">
    <text evidence="1">Homodimer.</text>
</comment>
<comment type="subcellular location">
    <subcellularLocation>
        <location evidence="1">Cytoplasm</location>
    </subcellularLocation>
</comment>
<comment type="miscellaneous">
    <text evidence="1">The reaction proceeds by a bi uni uni bi ping pong mechanism.</text>
</comment>
<comment type="similarity">
    <text evidence="1">Belongs to the pantothenate synthetase family.</text>
</comment>
<accession>Q89ZR8</accession>
<dbReference type="EC" id="6.3.2.1" evidence="1"/>
<dbReference type="EMBL" id="AE015928">
    <property type="protein sequence ID" value="AAO79413.1"/>
    <property type="molecule type" value="Genomic_DNA"/>
</dbReference>
<dbReference type="RefSeq" id="NP_813219.1">
    <property type="nucleotide sequence ID" value="NC_004663.1"/>
</dbReference>
<dbReference type="RefSeq" id="WP_008764495.1">
    <property type="nucleotide sequence ID" value="NC_004663.1"/>
</dbReference>
<dbReference type="SMR" id="Q89ZR8"/>
<dbReference type="FunCoup" id="Q89ZR8">
    <property type="interactions" value="509"/>
</dbReference>
<dbReference type="STRING" id="226186.BT_4308"/>
<dbReference type="PaxDb" id="226186-BT_4308"/>
<dbReference type="EnsemblBacteria" id="AAO79413">
    <property type="protein sequence ID" value="AAO79413"/>
    <property type="gene ID" value="BT_4308"/>
</dbReference>
<dbReference type="GeneID" id="60925486"/>
<dbReference type="KEGG" id="bth:BT_4308"/>
<dbReference type="PATRIC" id="fig|226186.12.peg.4384"/>
<dbReference type="eggNOG" id="COG0414">
    <property type="taxonomic scope" value="Bacteria"/>
</dbReference>
<dbReference type="HOGENOM" id="CLU_047148_0_0_10"/>
<dbReference type="InParanoid" id="Q89ZR8"/>
<dbReference type="OrthoDB" id="9773087at2"/>
<dbReference type="UniPathway" id="UPA00028">
    <property type="reaction ID" value="UER00005"/>
</dbReference>
<dbReference type="Proteomes" id="UP000001414">
    <property type="component" value="Chromosome"/>
</dbReference>
<dbReference type="GO" id="GO:0005829">
    <property type="term" value="C:cytosol"/>
    <property type="evidence" value="ECO:0000318"/>
    <property type="project" value="GO_Central"/>
</dbReference>
<dbReference type="GO" id="GO:0005524">
    <property type="term" value="F:ATP binding"/>
    <property type="evidence" value="ECO:0007669"/>
    <property type="project" value="UniProtKB-KW"/>
</dbReference>
<dbReference type="GO" id="GO:0004592">
    <property type="term" value="F:pantoate-beta-alanine ligase activity"/>
    <property type="evidence" value="ECO:0000318"/>
    <property type="project" value="GO_Central"/>
</dbReference>
<dbReference type="GO" id="GO:0015940">
    <property type="term" value="P:pantothenate biosynthetic process"/>
    <property type="evidence" value="ECO:0000318"/>
    <property type="project" value="GO_Central"/>
</dbReference>
<dbReference type="CDD" id="cd00560">
    <property type="entry name" value="PanC"/>
    <property type="match status" value="1"/>
</dbReference>
<dbReference type="FunFam" id="3.40.50.620:FF:000013">
    <property type="entry name" value="Pantothenate synthetase"/>
    <property type="match status" value="1"/>
</dbReference>
<dbReference type="Gene3D" id="3.40.50.620">
    <property type="entry name" value="HUPs"/>
    <property type="match status" value="1"/>
</dbReference>
<dbReference type="Gene3D" id="3.30.1300.10">
    <property type="entry name" value="Pantoate-beta-alanine ligase, C-terminal domain"/>
    <property type="match status" value="1"/>
</dbReference>
<dbReference type="HAMAP" id="MF_00158">
    <property type="entry name" value="PanC"/>
    <property type="match status" value="1"/>
</dbReference>
<dbReference type="InterPro" id="IPR003721">
    <property type="entry name" value="Pantoate_ligase"/>
</dbReference>
<dbReference type="InterPro" id="IPR042176">
    <property type="entry name" value="Pantoate_ligase_C"/>
</dbReference>
<dbReference type="InterPro" id="IPR014729">
    <property type="entry name" value="Rossmann-like_a/b/a_fold"/>
</dbReference>
<dbReference type="NCBIfam" id="TIGR00018">
    <property type="entry name" value="panC"/>
    <property type="match status" value="1"/>
</dbReference>
<dbReference type="PANTHER" id="PTHR21299">
    <property type="entry name" value="CYTIDYLATE KINASE/PANTOATE-BETA-ALANINE LIGASE"/>
    <property type="match status" value="1"/>
</dbReference>
<dbReference type="PANTHER" id="PTHR21299:SF1">
    <property type="entry name" value="PANTOATE--BETA-ALANINE LIGASE"/>
    <property type="match status" value="1"/>
</dbReference>
<dbReference type="Pfam" id="PF02569">
    <property type="entry name" value="Pantoate_ligase"/>
    <property type="match status" value="1"/>
</dbReference>
<dbReference type="SUPFAM" id="SSF52374">
    <property type="entry name" value="Nucleotidylyl transferase"/>
    <property type="match status" value="1"/>
</dbReference>
<reference key="1">
    <citation type="journal article" date="2003" name="Science">
        <title>A genomic view of the human-Bacteroides thetaiotaomicron symbiosis.</title>
        <authorList>
            <person name="Xu J."/>
            <person name="Bjursell M.K."/>
            <person name="Himrod J."/>
            <person name="Deng S."/>
            <person name="Carmichael L.K."/>
            <person name="Chiang H.C."/>
            <person name="Hooper L.V."/>
            <person name="Gordon J.I."/>
        </authorList>
    </citation>
    <scope>NUCLEOTIDE SEQUENCE [LARGE SCALE GENOMIC DNA]</scope>
    <source>
        <strain>ATCC 29148 / DSM 2079 / JCM 5827 / CCUG 10774 / NCTC 10582 / VPI-5482 / E50</strain>
    </source>
</reference>
<organism>
    <name type="scientific">Bacteroides thetaiotaomicron (strain ATCC 29148 / DSM 2079 / JCM 5827 / CCUG 10774 / NCTC 10582 / VPI-5482 / E50)</name>
    <dbReference type="NCBI Taxonomy" id="226186"/>
    <lineage>
        <taxon>Bacteria</taxon>
        <taxon>Pseudomonadati</taxon>
        <taxon>Bacteroidota</taxon>
        <taxon>Bacteroidia</taxon>
        <taxon>Bacteroidales</taxon>
        <taxon>Bacteroidaceae</taxon>
        <taxon>Bacteroides</taxon>
    </lineage>
</organism>
<sequence>MKVIHTIKDLQAELTALRAQGKKVGLVPTMGALHAGHASLVKRSVSENGVTVVSVFVNPTQFNDKNDLAKYPRTLDADCRLLEDCGAAFAFAPSVEEMYPQPDTREFSYAPLDTVMEGAFRPGHFNGVCQIVSKLFDAVQPDRAYFGEKDFQQLAIIREMVRQMDYKLEIVGCPIVREEDGLALSSRNKRLSARERENALNISQTLFKSRTFAASHTVSETQKMVEEAIEDAPGLRLEYFEIVDGNTLQKVSSWEDSLYVVGCITVFCGEVRLIDNIKYKEI</sequence>
<name>PANC_BACTN</name>
<proteinExistence type="inferred from homology"/>